<accession>P35094</accession>
<evidence type="ECO:0000255" key="1"/>
<evidence type="ECO:0000305" key="2"/>
<evidence type="ECO:0007829" key="3">
    <source>
        <dbReference type="PDB" id="1IJD"/>
    </source>
</evidence>
<dbReference type="PDB" id="1IJD">
    <property type="method" value="X-ray"/>
    <property type="resolution" value="3.00 A"/>
    <property type="chains" value="B/D/F=1-42"/>
</dbReference>
<dbReference type="PDBsum" id="1IJD"/>
<dbReference type="SMR" id="P35094"/>
<dbReference type="DrugBank" id="DB04464">
    <property type="generic name" value="N-Formylmethionine"/>
</dbReference>
<dbReference type="EvolutionaryTrace" id="P35094"/>
<dbReference type="GO" id="GO:0005886">
    <property type="term" value="C:plasma membrane"/>
    <property type="evidence" value="ECO:0007669"/>
    <property type="project" value="UniProtKB-SubCell"/>
</dbReference>
<dbReference type="GO" id="GO:0030077">
    <property type="term" value="C:plasma membrane light-harvesting complex"/>
    <property type="evidence" value="ECO:0007669"/>
    <property type="project" value="InterPro"/>
</dbReference>
<dbReference type="GO" id="GO:0042314">
    <property type="term" value="F:bacteriochlorophyll binding"/>
    <property type="evidence" value="ECO:0007669"/>
    <property type="project" value="UniProtKB-KW"/>
</dbReference>
<dbReference type="GO" id="GO:0045156">
    <property type="term" value="F:electron transporter, transferring electrons within the cyclic electron transport pathway of photosynthesis activity"/>
    <property type="evidence" value="ECO:0007669"/>
    <property type="project" value="InterPro"/>
</dbReference>
<dbReference type="GO" id="GO:0046872">
    <property type="term" value="F:metal ion binding"/>
    <property type="evidence" value="ECO:0007669"/>
    <property type="project" value="UniProtKB-KW"/>
</dbReference>
<dbReference type="GO" id="GO:0019684">
    <property type="term" value="P:photosynthesis, light reaction"/>
    <property type="evidence" value="ECO:0007669"/>
    <property type="project" value="InterPro"/>
</dbReference>
<dbReference type="Gene3D" id="1.20.5.250">
    <property type="match status" value="1"/>
</dbReference>
<dbReference type="InterPro" id="IPR000066">
    <property type="entry name" value="Antenna_a/b"/>
</dbReference>
<dbReference type="InterPro" id="IPR023623">
    <property type="entry name" value="Antenna_beta_CS"/>
</dbReference>
<dbReference type="InterPro" id="IPR023624">
    <property type="entry name" value="Antenna_beta_dom_sf"/>
</dbReference>
<dbReference type="InterPro" id="IPR002362">
    <property type="entry name" value="LHB-1/5"/>
</dbReference>
<dbReference type="InterPro" id="IPR035889">
    <property type="entry name" value="Light-harvesting_complex"/>
</dbReference>
<dbReference type="NCBIfam" id="NF040862">
    <property type="entry name" value="pufB_517_ASD"/>
    <property type="match status" value="1"/>
</dbReference>
<dbReference type="Pfam" id="PF00556">
    <property type="entry name" value="LHC"/>
    <property type="match status" value="1"/>
</dbReference>
<dbReference type="PIRSF" id="PIRSF002900">
    <property type="entry name" value="Antenna_beta"/>
    <property type="match status" value="1"/>
</dbReference>
<dbReference type="PRINTS" id="PR00674">
    <property type="entry name" value="LIGHTHARVSTB"/>
</dbReference>
<dbReference type="SUPFAM" id="SSF56918">
    <property type="entry name" value="Light-harvesting complex subunits"/>
    <property type="match status" value="1"/>
</dbReference>
<dbReference type="PROSITE" id="PS00969">
    <property type="entry name" value="ANTENNA_COMP_BETA"/>
    <property type="match status" value="1"/>
</dbReference>
<name>LHB1_RHOAC</name>
<keyword id="KW-0002">3D-structure</keyword>
<keyword id="KW-0042">Antenna complex</keyword>
<keyword id="KW-0076">Bacteriochlorophyll</keyword>
<keyword id="KW-0997">Cell inner membrane</keyword>
<keyword id="KW-1003">Cell membrane</keyword>
<keyword id="KW-0148">Chlorophyll</keyword>
<keyword id="KW-0157">Chromophore</keyword>
<keyword id="KW-0903">Direct protein sequencing</keyword>
<keyword id="KW-0437">Light-harvesting polypeptide</keyword>
<keyword id="KW-0460">Magnesium</keyword>
<keyword id="KW-0472">Membrane</keyword>
<keyword id="KW-0479">Metal-binding</keyword>
<keyword id="KW-0812">Transmembrane</keyword>
<keyword id="KW-1133">Transmembrane helix</keyword>
<feature type="chain" id="PRO_0000099815" description="Light-harvesting protein B-800/820 beta chain">
    <location>
        <begin position="1"/>
        <end position="42"/>
    </location>
</feature>
<feature type="topological domain" description="Cytoplasmic" evidence="1">
    <location>
        <begin position="1"/>
        <end position="14"/>
    </location>
</feature>
<feature type="transmembrane region" description="Helical" evidence="1">
    <location>
        <begin position="15"/>
        <end position="37"/>
    </location>
</feature>
<feature type="topological domain" description="Periplasmic" evidence="1">
    <location>
        <begin position="38"/>
        <end position="42"/>
    </location>
</feature>
<feature type="binding site" description="axial binding residue" evidence="1">
    <location>
        <position position="13"/>
    </location>
    <ligand>
        <name>a bacteriochlorophyll</name>
        <dbReference type="ChEBI" id="CHEBI:38201"/>
    </ligand>
    <ligandPart>
        <name>Mg</name>
        <dbReference type="ChEBI" id="CHEBI:25107"/>
    </ligandPart>
</feature>
<feature type="binding site" description="axial binding residue" evidence="1">
    <location>
        <position position="31"/>
    </location>
    <ligand>
        <name>a bacteriochlorophyll</name>
        <dbReference type="ChEBI" id="CHEBI:38201"/>
    </ligand>
    <ligandPart>
        <name>Mg</name>
        <dbReference type="ChEBI" id="CHEBI:25107"/>
    </ligandPart>
</feature>
<feature type="helix" evidence="3">
    <location>
        <begin position="6"/>
        <end position="36"/>
    </location>
</feature>
<organism>
    <name type="scientific">Rhodoblastus acidophilus</name>
    <name type="common">Rhodopseudomonas acidophila</name>
    <dbReference type="NCBI Taxonomy" id="1074"/>
    <lineage>
        <taxon>Bacteria</taxon>
        <taxon>Pseudomonadati</taxon>
        <taxon>Pseudomonadota</taxon>
        <taxon>Alphaproteobacteria</taxon>
        <taxon>Hyphomicrobiales</taxon>
        <taxon>Rhodoblastaceae</taxon>
        <taxon>Rhodoblastus</taxon>
    </lineage>
</organism>
<protein>
    <recommendedName>
        <fullName>Light-harvesting protein B-800/820 beta chain</fullName>
    </recommendedName>
    <alternativeName>
        <fullName>Antenna pigment protein beta chain</fullName>
    </alternativeName>
    <alternativeName>
        <fullName>LH3 complex subunit beta</fullName>
    </alternativeName>
</protein>
<sequence length="42" mass="4725">AEVLTSEQAEELHKHVIDGTRVFLVIAAIAHFLAFTLTPWLH</sequence>
<reference key="1">
    <citation type="book" date="1987" name="Progress in photosynthesis research">
        <editorList>
            <person name="Biggins J."/>
        </editorList>
        <authorList>
            <person name="Brunisholz R.A."/>
            <person name="Bissig I."/>
            <person name="Niederer E."/>
            <person name="Suter F."/>
            <person name="Zuber H."/>
        </authorList>
    </citation>
    <scope>PROTEIN SEQUENCE</scope>
    <source>
        <strain>ATCC 25092 / 7050 / DSM 137 / LMG 4304 / NCIB 11761</strain>
    </source>
</reference>
<reference key="2">
    <citation type="journal article" date="2001" name="Biochemistry">
        <title>The crystallographic structure of the B800-820 LH3 light-harvesting complex from the purple bacteria Rhodopseudomonas acidophila strain 7050.</title>
        <authorList>
            <person name="McLuskey K."/>
            <person name="Prince S.M."/>
            <person name="Cogdell R.J."/>
            <person name="Isaacs N.W."/>
        </authorList>
    </citation>
    <scope>X-RAY CRYSTALLOGRAPHY (3.0 ANGSTROMS) OF 1-42</scope>
    <source>
        <strain>ATCC 25092 / 7050 / DSM 137 / LMG 4304 / NCIB 11761</strain>
    </source>
</reference>
<comment type="function">
    <text>Antenna complexes are light-harvesting systems, which transfer the excitation energy to the reaction centers.</text>
</comment>
<comment type="subunit">
    <text>The core complex is formed by different alpha and beta chains, binding bacteriochlorophyll molecules, and arranged most probably in tetrameric structures disposed around the reaction center. The non-pigmented gamma chains may constitute additional components.</text>
</comment>
<comment type="subcellular location">
    <subcellularLocation>
        <location>Cell inner membrane</location>
        <topology>Single-pass type II membrane protein</topology>
    </subcellularLocation>
</comment>
<comment type="similarity">
    <text evidence="2">Belongs to the antenna complex beta subunit family.</text>
</comment>
<proteinExistence type="evidence at protein level"/>